<evidence type="ECO:0000250" key="1">
    <source>
        <dbReference type="UniProtKB" id="O94986"/>
    </source>
</evidence>
<evidence type="ECO:0000250" key="2">
    <source>
        <dbReference type="UniProtKB" id="Q498G2"/>
    </source>
</evidence>
<evidence type="ECO:0000255" key="3"/>
<evidence type="ECO:0000256" key="4">
    <source>
        <dbReference type="SAM" id="MobiDB-lite"/>
    </source>
</evidence>
<evidence type="ECO:0000269" key="5">
    <source>
    </source>
</evidence>
<evidence type="ECO:0000305" key="6"/>
<evidence type="ECO:0007744" key="7">
    <source>
    </source>
</evidence>
<keyword id="KW-0007">Acetylation</keyword>
<keyword id="KW-0970">Cilium biogenesis/degradation</keyword>
<keyword id="KW-0175">Coiled coil</keyword>
<keyword id="KW-0963">Cytoplasm</keyword>
<keyword id="KW-0206">Cytoskeleton</keyword>
<keyword id="KW-0597">Phosphoprotein</keyword>
<keyword id="KW-1185">Reference proteome</keyword>
<name>CE152_MOUSE</name>
<comment type="function">
    <text evidence="1 2 5">Necessary for centrosome duplication; the function also seems to involve CEP63, CDK5RAP2 and WDR62 through a stepwise assembled complex at the centrosome that recruits CDK2 required for centriole duplication (By similarity). Acts as a molecular scaffold facilitating the interaction of PLK4 and CPAP, 2 molecules involved in centriole formation (By similarity). Proposed to snatch PLK4 away from PLK4:CEP92 complexes in early G1 daughter centriole and to reposition PLK4 at the outer boundary of a newly forming CEP152 ring structure (By similarity). Also plays a key role in deuterosome-mediated centriole amplification in multiciliated that can generate more than 100 centrioles (PubMed:24240477). Overexpression of cep152 can drive amplification of centrioles.</text>
</comment>
<comment type="subunit">
    <text evidence="1 5">Interacts (via N-terminus) with PLK4; the interaction is mutally exclusive with a PLK4:CEP192 interaction. Interacts (via C-terminus) with CPAP (via-N-terminus). Interacts with CINP. Interacts with CDK5RAP2, WDR62, CEP63 and CEP131. CEP63, CDK5RAP2, CEP152, WDR62 are proposed to form a stepwise assembled complex at the centrosome forming a ring near parental centrioles (By similarity). Interacts with DEUP1; this interaction recruits CEP152 to the deuterosome. The interactions with CEP63 and DEUP1 are mutually exclusive (PubMed:24240477). Interacts with CCDC66 (By similarity).</text>
</comment>
<comment type="interaction">
    <interactant intactId="EBI-2554268">
        <id>A2AUM9</id>
    </interactant>
    <interactant intactId="EBI-16081652">
        <id>Q3UPP8</id>
        <label>Cep63</label>
    </interactant>
    <organismsDiffer>false</organismsDiffer>
    <experiments>2</experiments>
</comment>
<comment type="interaction">
    <interactant intactId="EBI-2554268">
        <id>A2AUM9</id>
    </interactant>
    <interactant intactId="EBI-16081624">
        <id>Q7M6Y5</id>
        <label>Deup1</label>
    </interactant>
    <organismsDiffer>false</organismsDiffer>
    <experiments>2</experiments>
</comment>
<comment type="interaction">
    <interactant intactId="EBI-2554268">
        <id>A2AUM9</id>
    </interactant>
    <interactant intactId="EBI-741977">
        <id>Q96MT8</id>
        <label>CEP63</label>
    </interactant>
    <organismsDiffer>true</organismsDiffer>
    <experiments>3</experiments>
</comment>
<comment type="subcellular location">
    <subcellularLocation>
        <location evidence="1">Cytoplasm</location>
        <location evidence="1">Cytoskeleton</location>
        <location evidence="1">Microtubule organizing center</location>
        <location evidence="1">Centrosome</location>
    </subcellularLocation>
    <subcellularLocation>
        <location evidence="1">Cytoplasm</location>
        <location evidence="1">Cytoskeleton</location>
        <location evidence="1">Microtubule organizing center</location>
        <location evidence="1">Centrosome</location>
        <location evidence="1">Centriole</location>
    </subcellularLocation>
    <text evidence="1 5">Colocalizes with CDK5RAP2, WDR62 and CEP63 in a discrete ring around the proximal end of the parental centriole (By similarity). At this site, a cohesive structure is predicted to engage parental centrioles and procentrioles (By similarity). Localizes to the deuterosome (PubMed:24240477). Localizes to pericentriolar material (PCM) (By similarity).</text>
</comment>
<comment type="similarity">
    <text evidence="6">Belongs to the CEP152 family.</text>
</comment>
<comment type="sequence caution" evidence="6">
    <conflict type="erroneous initiation">
        <sequence resource="EMBL-CDS" id="BAD32338"/>
    </conflict>
    <text>Extended N-terminus.</text>
</comment>
<feature type="chain" id="PRO_0000424820" description="Centrosomal protein of 152 kDa">
    <location>
        <begin position="1"/>
        <end position="1736"/>
    </location>
</feature>
<feature type="region of interest" description="Disordered" evidence="4">
    <location>
        <begin position="1"/>
        <end position="127"/>
    </location>
</feature>
<feature type="region of interest" description="Interaction with PLK4" evidence="1">
    <location>
        <begin position="1"/>
        <end position="60"/>
    </location>
</feature>
<feature type="region of interest" description="Disordered" evidence="4">
    <location>
        <begin position="571"/>
        <end position="592"/>
    </location>
</feature>
<feature type="region of interest" description="Disordered" evidence="4">
    <location>
        <begin position="1416"/>
        <end position="1479"/>
    </location>
</feature>
<feature type="region of interest" description="Disordered" evidence="4">
    <location>
        <begin position="1543"/>
        <end position="1562"/>
    </location>
</feature>
<feature type="region of interest" description="Disordered" evidence="4">
    <location>
        <begin position="1574"/>
        <end position="1614"/>
    </location>
</feature>
<feature type="region of interest" description="Disordered" evidence="4">
    <location>
        <begin position="1677"/>
        <end position="1736"/>
    </location>
</feature>
<feature type="coiled-coil region" evidence="3">
    <location>
        <begin position="228"/>
        <end position="481"/>
    </location>
</feature>
<feature type="coiled-coil region" evidence="3">
    <location>
        <begin position="552"/>
        <end position="651"/>
    </location>
</feature>
<feature type="coiled-coil region" evidence="3">
    <location>
        <begin position="692"/>
        <end position="776"/>
    </location>
</feature>
<feature type="coiled-coil region" evidence="3">
    <location>
        <begin position="835"/>
        <end position="868"/>
    </location>
</feature>
<feature type="coiled-coil region" evidence="3">
    <location>
        <begin position="950"/>
        <end position="1075"/>
    </location>
</feature>
<feature type="coiled-coil region" evidence="3">
    <location>
        <begin position="1205"/>
        <end position="1315"/>
    </location>
</feature>
<feature type="compositionally biased region" description="Basic and acidic residues" evidence="4">
    <location>
        <begin position="61"/>
        <end position="82"/>
    </location>
</feature>
<feature type="compositionally biased region" description="Basic and acidic residues" evidence="4">
    <location>
        <begin position="94"/>
        <end position="105"/>
    </location>
</feature>
<feature type="compositionally biased region" description="Basic and acidic residues" evidence="4">
    <location>
        <begin position="575"/>
        <end position="592"/>
    </location>
</feature>
<feature type="compositionally biased region" description="Basic and acidic residues" evidence="4">
    <location>
        <begin position="1462"/>
        <end position="1473"/>
    </location>
</feature>
<feature type="compositionally biased region" description="Polar residues" evidence="4">
    <location>
        <begin position="1576"/>
        <end position="1595"/>
    </location>
</feature>
<feature type="compositionally biased region" description="Polar residues" evidence="4">
    <location>
        <begin position="1603"/>
        <end position="1614"/>
    </location>
</feature>
<feature type="modified residue" description="Phosphothreonine" evidence="1">
    <location>
        <position position="1277"/>
    </location>
</feature>
<feature type="modified residue" description="N6-acetyllysine" evidence="7">
    <location>
        <position position="1714"/>
    </location>
</feature>
<gene>
    <name type="primary">Cep152</name>
    <name type="synonym">Kiaa0912</name>
</gene>
<sequence length="1736" mass="196534">MSLEFGSVALQTQNEDEEFDKEDFEREKELQQLLTDLPHDMLDDELSSPERHDSDCSMDGRAAEPHPSEHLERKWIERDILPKPHSMNCGNGWEENRSKTEDQHLGYHPGEGGDEGGSGYSPPGKREQADLYRLPEDFRPYTGGSKQAASVITFSDPQRDNFQQFGLSRGPSCGALEPYKAVYKPYRNSSVQKNSSPAQEVAASDMFEGLQQQFLGANETDSAENIHIIQLQVLNKAKERQLDSLVEKLKDSERQVRYLSHQLLIVQDEKDGLALSLRESQQLFQNGKEREMQLEAQIAALEAQVEAFRVSEEKLTKKLRTTEITLESLKQQLVELHHSESLQRAREHHESIVASLTQKHEEQVSSLQKNLDATITALQEQESICTRLKDHVQQLERNQEAVRLEKTELINRLTRSLEDSQKQCAHLLQSGSVQEVAQLQLQLQQAQKAHVLSESMNKALQEELTELKDEISLYESAAELGVLPGDSEGDLSIELTESCVDLGIKKVNWKQSKANRVTQQESPDEDPSKDELILKLKTQVQRLLTSNSVKRHLVSQLQSDLRECRETMEAFQQSKDGDSGMETKTDTSEKTTKQLWLESSEAINREDILQLKNEVQVLQKQNQELKEAEEKLRSTNQDLCNQMRQMVQEFDHDKQEAVARCERTYQQHHEAMKAQIRESLLAKHAVEKQHLLEVYEGTQSQLRSDLDKMNKEMAAVQECYLEVCREKDGLESTLRKTMEKAQEQKRQLLEAREEYVRKLKLELEEKYQETLKTERQSWLQEQAAGATQQAEKESRQKLIQQLEKEWQSKLDDSLAAWRKTTSDRGSQTEQVACPAAVSKAEAAAVLAEEQARQVQQEKELATKEALRKPEVELELKYCEIIAQKVETAVQNARSRWIQELPMLAEYKALLRAQQQEWAKQQELAVAHRLSLALSEAKEKWKSELENMKPNVMSVKELEEKVHSLQKELELKDEEVPVIVRAEVAKARTEWNKEKQEEIHKIQEQNEEDYRQFLEDHRNKINEVLAAAKEDFVKQKAELLLQKETEFQACLDQSRKEWTLQEAQQTQVEIRQYEEDTLTVLAYLLKDTQLEYGGDSQDKQLLEAMSACSSKWISVQYFEKVKACIQKALHDMLSLLTDSVASEQEKRKVVKSSADTVSWTSSEGDSAVPVPLPDSTSVRCAQSSAWLKAEAETDKKICEIKGLRCGHCFQELEKEKQECQDLRRKLEKCRRHLQHLERTHRAAVEKLGEENSRVVEELIEENHDMKNKLEALRALCRTPPRSLSAGAAESAGPSCSRQALEELRGQYIKAVRKIKRDMLRYIQESKERAAEMVKAEVLRERQETARKMRNYYLSCLQQILQDNGKEEGAEKKIMSAASKLATMAELLGTIAESDCRVRCAQAGRSVALPLASEMLTGTERSERSGVNHNIPHYVESKPNSGKTLPRSVCEQLPGRKAAPRSQRRLEESKHREMRPMASTALPSDCRCGDASCRHSGVLAKDVAPEFVPCQGEGGFDLHEKRDALGAGSEPLLYSAAHSFLGGAEKNSSPRCISESRHTTLRSPSEMPRLKALMCGSPTETDSIASEKSQGVGSQDSPVKDGVGPSSSPAWPSDSTLPCGSPAVLFLGDGSQRTQEMLGDSVQWKQFSATSCHPDAQKSNMVCRSSHTLDLPKETLHSQQGKMGATLGHPSPQSTDMLKTDFKRLSGTGPSSLCQKPLIKLTAPMPSQQDSGFDSPLE</sequence>
<reference key="1">
    <citation type="journal article" date="2004" name="DNA Res.">
        <title>Prediction of the coding sequences of mouse homologues of KIAA gene: IV. The complete nucleotide sequences of 500 mouse KIAA-homologous cDNAs identified by screening of terminal sequences of cDNA clones randomly sampled from size-fractionated libraries.</title>
        <authorList>
            <person name="Okazaki N."/>
            <person name="Kikuno R."/>
            <person name="Ohara R."/>
            <person name="Inamoto S."/>
            <person name="Koseki H."/>
            <person name="Hiraoka S."/>
            <person name="Saga Y."/>
            <person name="Seino S."/>
            <person name="Nishimura M."/>
            <person name="Kaisho T."/>
            <person name="Hoshino K."/>
            <person name="Kitamura H."/>
            <person name="Nagase T."/>
            <person name="Ohara O."/>
            <person name="Koga H."/>
        </authorList>
    </citation>
    <scope>NUCLEOTIDE SEQUENCE [LARGE SCALE MRNA]</scope>
    <source>
        <tissue>Thymus</tissue>
    </source>
</reference>
<reference key="2">
    <citation type="journal article" date="2009" name="PLoS Biol.">
        <title>Lineage-specific biology revealed by a finished genome assembly of the mouse.</title>
        <authorList>
            <person name="Church D.M."/>
            <person name="Goodstadt L."/>
            <person name="Hillier L.W."/>
            <person name="Zody M.C."/>
            <person name="Goldstein S."/>
            <person name="She X."/>
            <person name="Bult C.J."/>
            <person name="Agarwala R."/>
            <person name="Cherry J.L."/>
            <person name="DiCuccio M."/>
            <person name="Hlavina W."/>
            <person name="Kapustin Y."/>
            <person name="Meric P."/>
            <person name="Maglott D."/>
            <person name="Birtle Z."/>
            <person name="Marques A.C."/>
            <person name="Graves T."/>
            <person name="Zhou S."/>
            <person name="Teague B."/>
            <person name="Potamousis K."/>
            <person name="Churas C."/>
            <person name="Place M."/>
            <person name="Herschleb J."/>
            <person name="Runnheim R."/>
            <person name="Forrest D."/>
            <person name="Amos-Landgraf J."/>
            <person name="Schwartz D.C."/>
            <person name="Cheng Z."/>
            <person name="Lindblad-Toh K."/>
            <person name="Eichler E.E."/>
            <person name="Ponting C.P."/>
        </authorList>
    </citation>
    <scope>NUCLEOTIDE SEQUENCE [LARGE SCALE GENOMIC DNA]</scope>
    <source>
        <strain>C57BL/6J</strain>
    </source>
</reference>
<reference key="3">
    <citation type="journal article" date="2004" name="Genome Res.">
        <title>The status, quality, and expansion of the NIH full-length cDNA project: the Mammalian Gene Collection (MGC).</title>
        <authorList>
            <consortium name="The MGC Project Team"/>
        </authorList>
    </citation>
    <scope>NUCLEOTIDE SEQUENCE [LARGE SCALE MRNA] OF 1010-1736</scope>
    <source>
        <strain>FVB/N</strain>
        <tissue>Mammary tumor</tissue>
    </source>
</reference>
<reference key="4">
    <citation type="journal article" date="2013" name="Mol. Cell">
        <title>SIRT5-mediated lysine desuccinylation impacts diverse metabolic pathways.</title>
        <authorList>
            <person name="Park J."/>
            <person name="Chen Y."/>
            <person name="Tishkoff D.X."/>
            <person name="Peng C."/>
            <person name="Tan M."/>
            <person name="Dai L."/>
            <person name="Xie Z."/>
            <person name="Zhang Y."/>
            <person name="Zwaans B.M."/>
            <person name="Skinner M.E."/>
            <person name="Lombard D.B."/>
            <person name="Zhao Y."/>
        </authorList>
    </citation>
    <scope>ACETYLATION [LARGE SCALE ANALYSIS] AT LYS-1714</scope>
    <scope>IDENTIFICATION BY MASS SPECTROMETRY [LARGE SCALE ANALYSIS]</scope>
    <source>
        <tissue>Embryonic fibroblast</tissue>
    </source>
</reference>
<reference key="5">
    <citation type="journal article" date="2013" name="Nat. Cell Biol.">
        <title>The Cep63 paralogue Deup1 enables massive de novo centriole biogenesis for vertebrate multiciliogenesis.</title>
        <authorList>
            <person name="Zhao H."/>
            <person name="Zhu L."/>
            <person name="Zhu Y."/>
            <person name="Cao J."/>
            <person name="Li S."/>
            <person name="Huang Q."/>
            <person name="Xu T."/>
            <person name="Huang X."/>
            <person name="Yan X."/>
            <person name="Zhu X."/>
        </authorList>
    </citation>
    <scope>INTERACTION WITH CEP63 AND DEUP1</scope>
    <scope>SUBCELLULAR LOCATION</scope>
    <scope>FUNCTION</scope>
</reference>
<protein>
    <recommendedName>
        <fullName>Centrosomal protein of 152 kDa</fullName>
        <shortName>Cep152</shortName>
    </recommendedName>
</protein>
<proteinExistence type="evidence at protein level"/>
<organism>
    <name type="scientific">Mus musculus</name>
    <name type="common">Mouse</name>
    <dbReference type="NCBI Taxonomy" id="10090"/>
    <lineage>
        <taxon>Eukaryota</taxon>
        <taxon>Metazoa</taxon>
        <taxon>Chordata</taxon>
        <taxon>Craniata</taxon>
        <taxon>Vertebrata</taxon>
        <taxon>Euteleostomi</taxon>
        <taxon>Mammalia</taxon>
        <taxon>Eutheria</taxon>
        <taxon>Euarchontoglires</taxon>
        <taxon>Glires</taxon>
        <taxon>Rodentia</taxon>
        <taxon>Myomorpha</taxon>
        <taxon>Muroidea</taxon>
        <taxon>Muridae</taxon>
        <taxon>Murinae</taxon>
        <taxon>Mus</taxon>
        <taxon>Mus</taxon>
    </lineage>
</organism>
<accession>A2AUM9</accession>
<accession>Q69ZV8</accession>
<accession>Q8R0X1</accession>
<dbReference type="EMBL" id="AK173060">
    <property type="protein sequence ID" value="BAD32338.1"/>
    <property type="status" value="ALT_INIT"/>
    <property type="molecule type" value="mRNA"/>
</dbReference>
<dbReference type="EMBL" id="AL928930">
    <property type="status" value="NOT_ANNOTATED_CDS"/>
    <property type="molecule type" value="Genomic_DNA"/>
</dbReference>
<dbReference type="EMBL" id="AL929166">
    <property type="status" value="NOT_ANNOTATED_CDS"/>
    <property type="molecule type" value="Genomic_DNA"/>
</dbReference>
<dbReference type="EMBL" id="BX321866">
    <property type="status" value="NOT_ANNOTATED_CDS"/>
    <property type="molecule type" value="Genomic_DNA"/>
</dbReference>
<dbReference type="EMBL" id="BC026366">
    <property type="protein sequence ID" value="AAH26366.1"/>
    <property type="molecule type" value="mRNA"/>
</dbReference>
<dbReference type="CCDS" id="CCDS38229.1"/>
<dbReference type="RefSeq" id="NP_001074560.1">
    <property type="nucleotide sequence ID" value="NM_001081091.1"/>
</dbReference>
<dbReference type="SMR" id="A2AUM9"/>
<dbReference type="BioGRID" id="221186">
    <property type="interactions" value="86"/>
</dbReference>
<dbReference type="ComplexPortal" id="CPX-1160">
    <property type="entry name" value="CEP152-PLK4 complex"/>
</dbReference>
<dbReference type="DIP" id="DIP-56915N"/>
<dbReference type="FunCoup" id="A2AUM9">
    <property type="interactions" value="1225"/>
</dbReference>
<dbReference type="IntAct" id="A2AUM9">
    <property type="interactions" value="85"/>
</dbReference>
<dbReference type="STRING" id="10090.ENSMUSP00000087208"/>
<dbReference type="iPTMnet" id="A2AUM9"/>
<dbReference type="PhosphoSitePlus" id="A2AUM9"/>
<dbReference type="jPOST" id="A2AUM9"/>
<dbReference type="PaxDb" id="10090-ENSMUSP00000087208"/>
<dbReference type="PeptideAtlas" id="A2AUM9"/>
<dbReference type="ProteomicsDB" id="281444"/>
<dbReference type="Pumba" id="A2AUM9"/>
<dbReference type="Antibodypedia" id="50528">
    <property type="antibodies" value="187 antibodies from 27 providers"/>
</dbReference>
<dbReference type="Ensembl" id="ENSMUST00000089776.3">
    <property type="protein sequence ID" value="ENSMUSP00000087208.3"/>
    <property type="gene ID" value="ENSMUSG00000068394.5"/>
</dbReference>
<dbReference type="GeneID" id="99100"/>
<dbReference type="KEGG" id="mmu:99100"/>
<dbReference type="UCSC" id="uc008mcs.1">
    <property type="organism name" value="mouse"/>
</dbReference>
<dbReference type="AGR" id="MGI:2139083"/>
<dbReference type="CTD" id="22995"/>
<dbReference type="MGI" id="MGI:2139083">
    <property type="gene designation" value="Cep152"/>
</dbReference>
<dbReference type="VEuPathDB" id="HostDB:ENSMUSG00000068394"/>
<dbReference type="eggNOG" id="ENOG502QT0E">
    <property type="taxonomic scope" value="Eukaryota"/>
</dbReference>
<dbReference type="GeneTree" id="ENSGT00950000182870"/>
<dbReference type="HOGENOM" id="CLU_003346_0_0_1"/>
<dbReference type="InParanoid" id="A2AUM9"/>
<dbReference type="OMA" id="CQSGHTS"/>
<dbReference type="OrthoDB" id="10064205at2759"/>
<dbReference type="PhylomeDB" id="A2AUM9"/>
<dbReference type="TreeFam" id="TF332017"/>
<dbReference type="Reactome" id="R-MMU-2565942">
    <property type="pathway name" value="Regulation of PLK1 Activity at G2/M Transition"/>
</dbReference>
<dbReference type="Reactome" id="R-MMU-380259">
    <property type="pathway name" value="Loss of Nlp from mitotic centrosomes"/>
</dbReference>
<dbReference type="Reactome" id="R-MMU-380270">
    <property type="pathway name" value="Recruitment of mitotic centrosome proteins and complexes"/>
</dbReference>
<dbReference type="Reactome" id="R-MMU-380284">
    <property type="pathway name" value="Loss of proteins required for interphase microtubule organization from the centrosome"/>
</dbReference>
<dbReference type="Reactome" id="R-MMU-380320">
    <property type="pathway name" value="Recruitment of NuMA to mitotic centrosomes"/>
</dbReference>
<dbReference type="Reactome" id="R-MMU-5620912">
    <property type="pathway name" value="Anchoring of the basal body to the plasma membrane"/>
</dbReference>
<dbReference type="Reactome" id="R-MMU-8854518">
    <property type="pathway name" value="AURKA Activation by TPX2"/>
</dbReference>
<dbReference type="BioGRID-ORCS" id="99100">
    <property type="hits" value="7 hits in 82 CRISPR screens"/>
</dbReference>
<dbReference type="CD-CODE" id="017348A2">
    <property type="entry name" value="Synthetic Condensate 000276"/>
</dbReference>
<dbReference type="PRO" id="PR:A2AUM9"/>
<dbReference type="Proteomes" id="UP000000589">
    <property type="component" value="Chromosome 2"/>
</dbReference>
<dbReference type="RNAct" id="A2AUM9">
    <property type="molecule type" value="protein"/>
</dbReference>
<dbReference type="Bgee" id="ENSMUSG00000068394">
    <property type="expression patterns" value="Expressed in ventricular system choroidal fissure and 198 other cell types or tissues"/>
</dbReference>
<dbReference type="GO" id="GO:0005814">
    <property type="term" value="C:centriole"/>
    <property type="evidence" value="ECO:0000250"/>
    <property type="project" value="UniProtKB"/>
</dbReference>
<dbReference type="GO" id="GO:0005813">
    <property type="term" value="C:centrosome"/>
    <property type="evidence" value="ECO:0000314"/>
    <property type="project" value="MGI"/>
</dbReference>
<dbReference type="GO" id="GO:0036064">
    <property type="term" value="C:ciliary basal body"/>
    <property type="evidence" value="ECO:0007669"/>
    <property type="project" value="Ensembl"/>
</dbReference>
<dbReference type="GO" id="GO:0098536">
    <property type="term" value="C:deuterosome"/>
    <property type="evidence" value="ECO:0000314"/>
    <property type="project" value="UniProtKB"/>
</dbReference>
<dbReference type="GO" id="GO:0016604">
    <property type="term" value="C:nuclear body"/>
    <property type="evidence" value="ECO:0007669"/>
    <property type="project" value="Ensembl"/>
</dbReference>
<dbReference type="GO" id="GO:0000242">
    <property type="term" value="C:pericentriolar material"/>
    <property type="evidence" value="ECO:0000250"/>
    <property type="project" value="UniProtKB"/>
</dbReference>
<dbReference type="GO" id="GO:0120098">
    <property type="term" value="C:procentriole"/>
    <property type="evidence" value="ECO:0000266"/>
    <property type="project" value="ComplexPortal"/>
</dbReference>
<dbReference type="GO" id="GO:0120099">
    <property type="term" value="C:procentriole replication complex"/>
    <property type="evidence" value="ECO:0000266"/>
    <property type="project" value="ComplexPortal"/>
</dbReference>
<dbReference type="GO" id="GO:0019901">
    <property type="term" value="F:protein kinase binding"/>
    <property type="evidence" value="ECO:0007669"/>
    <property type="project" value="Ensembl"/>
</dbReference>
<dbReference type="GO" id="GO:0030030">
    <property type="term" value="P:cell projection organization"/>
    <property type="evidence" value="ECO:0007669"/>
    <property type="project" value="UniProtKB-KW"/>
</dbReference>
<dbReference type="GO" id="GO:0007099">
    <property type="term" value="P:centriole replication"/>
    <property type="evidence" value="ECO:0000315"/>
    <property type="project" value="UniProtKB"/>
</dbReference>
<dbReference type="GO" id="GO:0098535">
    <property type="term" value="P:de novo centriole assembly involved in multi-ciliated epithelial cell differentiation"/>
    <property type="evidence" value="ECO:0000315"/>
    <property type="project" value="UniProtKB"/>
</dbReference>
<dbReference type="InterPro" id="IPR051235">
    <property type="entry name" value="CEP152/SHC-Transforming"/>
</dbReference>
<dbReference type="PANTHER" id="PTHR10337:SF6">
    <property type="entry name" value="CENTROSOMAL PROTEIN OF 152 KDA"/>
    <property type="match status" value="1"/>
</dbReference>
<dbReference type="PANTHER" id="PTHR10337">
    <property type="entry name" value="SHC TRANSFORMING PROTEIN"/>
    <property type="match status" value="1"/>
</dbReference>